<evidence type="ECO:0000250" key="1">
    <source>
        <dbReference type="UniProtKB" id="P22310"/>
    </source>
</evidence>
<evidence type="ECO:0000255" key="2"/>
<evidence type="ECO:0000305" key="3"/>
<sequence>MVLGVWITLWRLVRLLLLLCVLPWAEGGKVLVVPMDGSPWLSLREVVRDVHARGHQVLVLGPEVTMHIKGEDFFTLQTYATPYSKEEFDQLMQRNYQMIFKPQHSLKTLLETMENLKKFSMLCSRSCWELLHNKPLIKHLNESSFDVVLTDPLDLCGALLAKYLSVPSVFLLRFILCDLDFEGTQCPNPSSYIPRMLTMNSDHMSFLQRVKNMLYPLMMKYTCHISYDPYASLASELFQREVSLVDILSHASVWLFREDFVLDYPRPIMPNMVFIGGINCANRKPLSQEFEAYVNASGEHGIVVFSLGSMVSEIPEKKAMEIADALGKIPQTVLWRYTGSRPSNLAKNTYLVKWLPQNVLLGHPKTRAFITHSGSHGIYEGICNGVPMVMLPLFGDQMDNAKRIETRGAGVTLNVLEMTSDDLANALKTVINDKSYKENIMRLSSLHKDRPVEPLDLAVFWVEFVMRHKGAAPRPAAHDLTWYQYHSLDVIGFLLAIVLTVAFVTFKCCAFAWGKCFGKKGRVKKAHKSKVH</sequence>
<proteinExistence type="evidence at transcript level"/>
<gene>
    <name type="primary">Ugt1a4</name>
</gene>
<accession>Q28612</accession>
<keyword id="KW-0025">Alternative splicing</keyword>
<keyword id="KW-0256">Endoplasmic reticulum</keyword>
<keyword id="KW-0325">Glycoprotein</keyword>
<keyword id="KW-0328">Glycosyltransferase</keyword>
<keyword id="KW-0443">Lipid metabolism</keyword>
<keyword id="KW-0472">Membrane</keyword>
<keyword id="KW-1185">Reference proteome</keyword>
<keyword id="KW-0732">Signal</keyword>
<keyword id="KW-0808">Transferase</keyword>
<keyword id="KW-0812">Transmembrane</keyword>
<keyword id="KW-1133">Transmembrane helix</keyword>
<protein>
    <recommendedName>
        <fullName evidence="1">UDP-glucuronosyltransferase 1A4</fullName>
        <shortName evidence="1">UGT1A4</shortName>
        <ecNumber evidence="1">2.4.1.17</ecNumber>
    </recommendedName>
    <alternativeName>
        <fullName>UDP-glucuronosyltransferase 1-4</fullName>
        <shortName>UDPGT 1-4</shortName>
        <shortName>UGT1*4</shortName>
        <shortName>UGT1-04</shortName>
        <shortName>UGT1.4</shortName>
    </alternativeName>
</protein>
<comment type="function">
    <text evidence="1">UDP-glucuronosyltransferase (UGT) that catalyzes phase II biotransformation reactions in which lipophilic substrates are conjugated with glucuronic acid to increase the metabolite's water solubility, thereby facilitating excretion into either the urine or bile. Essential for the elimination and detoxification of drugs, xenobiotics and endogenous compounds. Involved in the glucuronidation of calcidiol, which is the major circulating form of vitamin D3 essential for the regulation of calcium and phosphate homeostasis. Also glucuronidates the biologically active form of vitamin D3, calcitriol, probably leading to its biliary transport and intestinal reabsorption. Involved in the glucuronidation of arachidonic acid (AA) and AA-derived eicosanoids including 15-HETE, 20-HETE and PGB1.</text>
</comment>
<comment type="catalytic activity">
    <reaction evidence="1">
        <text>glucuronate acceptor + UDP-alpha-D-glucuronate = acceptor beta-D-glucuronoside + UDP + H(+)</text>
        <dbReference type="Rhea" id="RHEA:21032"/>
        <dbReference type="ChEBI" id="CHEBI:15378"/>
        <dbReference type="ChEBI" id="CHEBI:58052"/>
        <dbReference type="ChEBI" id="CHEBI:58223"/>
        <dbReference type="ChEBI" id="CHEBI:132367"/>
        <dbReference type="ChEBI" id="CHEBI:132368"/>
        <dbReference type="EC" id="2.4.1.17"/>
    </reaction>
    <physiologicalReaction direction="left-to-right" evidence="1">
        <dbReference type="Rhea" id="RHEA:21033"/>
    </physiologicalReaction>
</comment>
<comment type="catalytic activity">
    <reaction evidence="1">
        <text>calcidiol + UDP-alpha-D-glucuronate = calcidiol 25-O-(beta-D-glucuronide) + UDP + H(+)</text>
        <dbReference type="Rhea" id="RHEA:55840"/>
        <dbReference type="ChEBI" id="CHEBI:15378"/>
        <dbReference type="ChEBI" id="CHEBI:17933"/>
        <dbReference type="ChEBI" id="CHEBI:58052"/>
        <dbReference type="ChEBI" id="CHEBI:58223"/>
        <dbReference type="ChEBI" id="CHEBI:139277"/>
    </reaction>
    <physiologicalReaction direction="left-to-right" evidence="1">
        <dbReference type="Rhea" id="RHEA:55841"/>
    </physiologicalReaction>
</comment>
<comment type="catalytic activity">
    <reaction evidence="1">
        <text>calcidiol + UDP-alpha-D-glucuronate = calcidiol 3-O-(beta-D-glucuronide) + UDP + H(+)</text>
        <dbReference type="Rhea" id="RHEA:55844"/>
        <dbReference type="ChEBI" id="CHEBI:15378"/>
        <dbReference type="ChEBI" id="CHEBI:17933"/>
        <dbReference type="ChEBI" id="CHEBI:58052"/>
        <dbReference type="ChEBI" id="CHEBI:58223"/>
        <dbReference type="ChEBI" id="CHEBI:139278"/>
    </reaction>
    <physiologicalReaction direction="left-to-right" evidence="1">
        <dbReference type="Rhea" id="RHEA:55845"/>
    </physiologicalReaction>
</comment>
<comment type="catalytic activity">
    <reaction evidence="1">
        <text>calcitriol + UDP-alpha-D-glucuronate = calcitriol 25-O-(beta-D-glucuronide) + UDP + H(+)</text>
        <dbReference type="Rhea" id="RHEA:55836"/>
        <dbReference type="ChEBI" id="CHEBI:15378"/>
        <dbReference type="ChEBI" id="CHEBI:17823"/>
        <dbReference type="ChEBI" id="CHEBI:58052"/>
        <dbReference type="ChEBI" id="CHEBI:58223"/>
        <dbReference type="ChEBI" id="CHEBI:139274"/>
    </reaction>
    <physiologicalReaction direction="left-to-right" evidence="1">
        <dbReference type="Rhea" id="RHEA:55837"/>
    </physiologicalReaction>
</comment>
<comment type="catalytic activity">
    <reaction evidence="1">
        <text>(5Z,8Z,11Z,14Z)-eicosatetraenoate + UDP-alpha-D-glucuronate = O-[(5Z),(8Z),(11Z),(14Z)-eicosatetraenoyl]-beta-D-glucuronate + UDP</text>
        <dbReference type="Rhea" id="RHEA:79915"/>
        <dbReference type="ChEBI" id="CHEBI:32395"/>
        <dbReference type="ChEBI" id="CHEBI:58052"/>
        <dbReference type="ChEBI" id="CHEBI:58223"/>
        <dbReference type="ChEBI" id="CHEBI:231327"/>
    </reaction>
    <physiologicalReaction direction="left-to-right" evidence="1">
        <dbReference type="Rhea" id="RHEA:79916"/>
    </physiologicalReaction>
</comment>
<comment type="catalytic activity">
    <reaction evidence="1">
        <text>15-hydroxy-(5Z,8Z,11Z,13E)-eicosatetraenoate + UDP-alpha-D-glucuronate = 15-O-(beta-D-glucuronosyl)-(5Z,8Z,11Z,14Z)-eicosatetraenoate + UDP + H(+)</text>
        <dbReference type="Rhea" id="RHEA:79919"/>
        <dbReference type="ChEBI" id="CHEBI:15378"/>
        <dbReference type="ChEBI" id="CHEBI:58052"/>
        <dbReference type="ChEBI" id="CHEBI:58223"/>
        <dbReference type="ChEBI" id="CHEBI:78832"/>
        <dbReference type="ChEBI" id="CHEBI:231329"/>
    </reaction>
    <physiologicalReaction direction="left-to-right" evidence="1">
        <dbReference type="Rhea" id="RHEA:79920"/>
    </physiologicalReaction>
</comment>
<comment type="catalytic activity">
    <reaction evidence="1">
        <text>20-hydroxy-(5Z,8Z,11Z,14Z)-eicosatetraenoate + UDP-alpha-D-glucuronate = 20-O-(beta-D-glucuronosyl)-(5Z,8Z,11Z,14Z)-eicosatetraenoate + UDP + H(+)</text>
        <dbReference type="Rhea" id="RHEA:79927"/>
        <dbReference type="ChEBI" id="CHEBI:15378"/>
        <dbReference type="ChEBI" id="CHEBI:58052"/>
        <dbReference type="ChEBI" id="CHEBI:58223"/>
        <dbReference type="ChEBI" id="CHEBI:76624"/>
        <dbReference type="ChEBI" id="CHEBI:231328"/>
    </reaction>
    <physiologicalReaction direction="left-to-right" evidence="1">
        <dbReference type="Rhea" id="RHEA:79928"/>
    </physiologicalReaction>
</comment>
<comment type="subunit">
    <text evidence="1">Homodimers. Homooligomer. Interacts with UGT1A1, UGT1A3, UGT1A6, UGT1A7, UGT1A8, UGT1A9 and UGT1A10 to form heterodimers.</text>
</comment>
<comment type="subcellular location">
    <subcellularLocation>
        <location evidence="1">Endoplasmic reticulum membrane</location>
        <topology evidence="2">Single-pass membrane protein</topology>
    </subcellularLocation>
</comment>
<comment type="alternative products">
    <event type="alternative splicing"/>
    <isoform>
        <id>Q28612-1</id>
        <name>1</name>
        <sequence type="displayed"/>
    </isoform>
    <text evidence="1">UGT1A4 is one of the isoforms produced at the UGT1A complex locus. The UGT1A complex locus produces different isoforms based on alternative use of promoters, first exons and terminal exons.</text>
</comment>
<comment type="similarity">
    <text evidence="3">Belongs to the UDP-glycosyltransferase family.</text>
</comment>
<reference key="1">
    <citation type="submission" date="1994-05" db="EMBL/GenBank/DDBJ databases">
        <authorList>
            <person name="Philipp T."/>
            <person name="Durazzo M."/>
            <person name="Trautwein C."/>
            <person name="Alex B."/>
            <person name="Johnson E.F."/>
            <person name="Straub J.G."/>
            <person name="Straub P."/>
            <person name="Tukey R.H."/>
            <person name="Manns M."/>
        </authorList>
    </citation>
    <scope>NUCLEOTIDE SEQUENCE [MRNA]</scope>
    <source>
        <strain>New Zealand white</strain>
        <tissue>Liver</tissue>
    </source>
</reference>
<dbReference type="EC" id="2.4.1.17" evidence="1"/>
<dbReference type="EMBL" id="U09101">
    <property type="protein sequence ID" value="AAA51868.1"/>
    <property type="molecule type" value="mRNA"/>
</dbReference>
<dbReference type="RefSeq" id="NP_001082791.1">
    <molecule id="Q28612-1"/>
    <property type="nucleotide sequence ID" value="NM_001089322.1"/>
</dbReference>
<dbReference type="SMR" id="Q28612"/>
<dbReference type="FunCoup" id="Q28612">
    <property type="interactions" value="231"/>
</dbReference>
<dbReference type="STRING" id="9986.ENSOCUP00000033104"/>
<dbReference type="CAZy" id="GT1">
    <property type="family name" value="Glycosyltransferase Family 1"/>
</dbReference>
<dbReference type="GlyCosmos" id="Q28612">
    <property type="glycosylation" value="2 sites, No reported glycans"/>
</dbReference>
<dbReference type="GeneID" id="100038310"/>
<dbReference type="KEGG" id="ocu:100038310"/>
<dbReference type="CTD" id="100038310"/>
<dbReference type="InParanoid" id="Q28612"/>
<dbReference type="OrthoDB" id="5835829at2759"/>
<dbReference type="Proteomes" id="UP000001811">
    <property type="component" value="Unplaced"/>
</dbReference>
<dbReference type="GO" id="GO:0005789">
    <property type="term" value="C:endoplasmic reticulum membrane"/>
    <property type="evidence" value="ECO:0007669"/>
    <property type="project" value="UniProtKB-SubCell"/>
</dbReference>
<dbReference type="GO" id="GO:0015020">
    <property type="term" value="F:glucuronosyltransferase activity"/>
    <property type="evidence" value="ECO:0000250"/>
    <property type="project" value="UniProtKB"/>
</dbReference>
<dbReference type="GO" id="GO:0042803">
    <property type="term" value="F:protein homodimerization activity"/>
    <property type="evidence" value="ECO:0000250"/>
    <property type="project" value="UniProtKB"/>
</dbReference>
<dbReference type="GO" id="GO:0070640">
    <property type="term" value="P:vitamin D3 metabolic process"/>
    <property type="evidence" value="ECO:0000250"/>
    <property type="project" value="UniProtKB"/>
</dbReference>
<dbReference type="CDD" id="cd03784">
    <property type="entry name" value="GT1_Gtf-like"/>
    <property type="match status" value="1"/>
</dbReference>
<dbReference type="FunFam" id="3.40.50.2000:FF:000001">
    <property type="entry name" value="UDP-glucuronosyltransferase"/>
    <property type="match status" value="1"/>
</dbReference>
<dbReference type="FunFam" id="3.40.50.2000:FF:000066">
    <property type="entry name" value="UDP-glucuronosyltransferase 1-1"/>
    <property type="match status" value="1"/>
</dbReference>
<dbReference type="Gene3D" id="3.40.50.2000">
    <property type="entry name" value="Glycogen Phosphorylase B"/>
    <property type="match status" value="2"/>
</dbReference>
<dbReference type="InterPro" id="IPR050271">
    <property type="entry name" value="UDP-glycosyltransferase"/>
</dbReference>
<dbReference type="InterPro" id="IPR002213">
    <property type="entry name" value="UDP_glucos_trans"/>
</dbReference>
<dbReference type="InterPro" id="IPR035595">
    <property type="entry name" value="UDP_glycos_trans_CS"/>
</dbReference>
<dbReference type="PANTHER" id="PTHR48043">
    <property type="entry name" value="EG:EG0003.4 PROTEIN-RELATED"/>
    <property type="match status" value="1"/>
</dbReference>
<dbReference type="PANTHER" id="PTHR48043:SF161">
    <property type="entry name" value="UDP GLUCURONOSYLTRANSFERASE FAMILY 1 MEMBER A1"/>
    <property type="match status" value="1"/>
</dbReference>
<dbReference type="Pfam" id="PF00201">
    <property type="entry name" value="UDPGT"/>
    <property type="match status" value="1"/>
</dbReference>
<dbReference type="SUPFAM" id="SSF53756">
    <property type="entry name" value="UDP-Glycosyltransferase/glycogen phosphorylase"/>
    <property type="match status" value="1"/>
</dbReference>
<dbReference type="PROSITE" id="PS00375">
    <property type="entry name" value="UDPGT"/>
    <property type="match status" value="1"/>
</dbReference>
<organism>
    <name type="scientific">Oryctolagus cuniculus</name>
    <name type="common">Rabbit</name>
    <dbReference type="NCBI Taxonomy" id="9986"/>
    <lineage>
        <taxon>Eukaryota</taxon>
        <taxon>Metazoa</taxon>
        <taxon>Chordata</taxon>
        <taxon>Craniata</taxon>
        <taxon>Vertebrata</taxon>
        <taxon>Euteleostomi</taxon>
        <taxon>Mammalia</taxon>
        <taxon>Eutheria</taxon>
        <taxon>Euarchontoglires</taxon>
        <taxon>Glires</taxon>
        <taxon>Lagomorpha</taxon>
        <taxon>Leporidae</taxon>
        <taxon>Oryctolagus</taxon>
    </lineage>
</organism>
<feature type="signal peptide" evidence="2">
    <location>
        <begin position="1"/>
        <end position="27"/>
    </location>
</feature>
<feature type="chain" id="PRO_0000036015" description="UDP-glucuronosyltransferase 1A4">
    <location>
        <begin position="28"/>
        <end position="532"/>
    </location>
</feature>
<feature type="transmembrane region" description="Helical" evidence="2">
    <location>
        <begin position="490"/>
        <end position="506"/>
    </location>
</feature>
<feature type="glycosylation site" description="N-linked (GlcNAc...) asparagine" evidence="2">
    <location>
        <position position="141"/>
    </location>
</feature>
<feature type="glycosylation site" description="N-linked (GlcNAc...) asparagine" evidence="2">
    <location>
        <position position="295"/>
    </location>
</feature>
<name>UD14_RABIT</name>